<comment type="function">
    <text evidence="1">Cytotoxin and helminthotoxin. MBP also induces non-cytolytic histamine release from basophils. It is involved in antiparasitic defense mechanisms and immune hypersensitivity reactions (By similarity).</text>
</comment>
<comment type="subcellular location">
    <subcellularLocation>
        <location evidence="2">Secreted</location>
    </subcellularLocation>
</comment>
<comment type="PTM">
    <text evidence="1">Nitrated.</text>
</comment>
<reference key="1">
    <citation type="journal article" date="1995" name="Biochim. Biophys. Acta">
        <title>Cloning of cDNA for rat eosinophil major basic protein.</title>
        <authorList>
            <person name="Nittoh T."/>
            <person name="Watanabe M."/>
            <person name="Okayama H."/>
            <person name="Misawa S."/>
            <person name="Isobe Y."/>
            <person name="Hayashi H."/>
            <person name="Mue S."/>
            <person name="Ohuchi K."/>
        </authorList>
    </citation>
    <scope>NUCLEOTIDE SEQUENCE [MRNA]</scope>
    <source>
        <strain>Sprague-Dawley</strain>
        <tissue>Bone marrow</tissue>
    </source>
</reference>
<reference key="2">
    <citation type="journal article" date="1996" name="Biochim. Biophys. Acta">
        <authorList>
            <person name="Nittoh T."/>
            <person name="Watanabe M."/>
            <person name="Okoyama H."/>
            <person name="Misawa S."/>
            <person name="Isobe Y."/>
            <person name="Hayashi H."/>
            <person name="Mue S."/>
            <person name="Ohuchi K."/>
        </authorList>
    </citation>
    <scope>ERRATUM OF PUBMED:8547309</scope>
</reference>
<keyword id="KW-0044">Antibiotic</keyword>
<keyword id="KW-0929">Antimicrobial</keyword>
<keyword id="KW-1015">Disulfide bond</keyword>
<keyword id="KW-0325">Glycoprotein</keyword>
<keyword id="KW-0391">Immunity</keyword>
<keyword id="KW-0430">Lectin</keyword>
<keyword id="KW-0944">Nitration</keyword>
<keyword id="KW-0654">Proteoglycan</keyword>
<keyword id="KW-1185">Reference proteome</keyword>
<keyword id="KW-0964">Secreted</keyword>
<keyword id="KW-0732">Signal</keyword>
<name>PRG2_RAT</name>
<evidence type="ECO:0000250" key="1"/>
<evidence type="ECO:0000250" key="2">
    <source>
        <dbReference type="UniProtKB" id="P13727"/>
    </source>
</evidence>
<evidence type="ECO:0000255" key="3"/>
<evidence type="ECO:0000255" key="4">
    <source>
        <dbReference type="PROSITE-ProRule" id="PRU00040"/>
    </source>
</evidence>
<evidence type="ECO:0000256" key="5">
    <source>
        <dbReference type="SAM" id="MobiDB-lite"/>
    </source>
</evidence>
<accession>Q63189</accession>
<feature type="signal peptide" evidence="3">
    <location>
        <begin position="1"/>
        <end position="16"/>
    </location>
</feature>
<feature type="chain" id="PRO_0000259925" description="Bone marrow proteoglycan">
    <location>
        <begin position="17"/>
        <end position="227"/>
    </location>
</feature>
<feature type="propeptide" id="PRO_0000017389" description="Acidic" evidence="1">
    <location>
        <begin position="17"/>
        <end position="110"/>
    </location>
</feature>
<feature type="chain" id="PRO_0000017390" description="Eosinophil granule major basic protein">
    <location>
        <begin position="111"/>
        <end position="227"/>
    </location>
</feature>
<feature type="domain" description="C-type lectin" evidence="4">
    <location>
        <begin position="128"/>
        <end position="227"/>
    </location>
</feature>
<feature type="region of interest" description="Disordered" evidence="5">
    <location>
        <begin position="21"/>
        <end position="105"/>
    </location>
</feature>
<feature type="compositionally biased region" description="Basic and acidic residues" evidence="5">
    <location>
        <begin position="34"/>
        <end position="46"/>
    </location>
</feature>
<feature type="compositionally biased region" description="Acidic residues" evidence="5">
    <location>
        <begin position="58"/>
        <end position="70"/>
    </location>
</feature>
<feature type="glycosylation site" description="O-linked (GalNAc...) serine" evidence="2">
    <location>
        <position position="24"/>
    </location>
</feature>
<feature type="glycosylation site" description="O-linked (Xyl...) (chondroitin sulfate) serine" evidence="2">
    <location>
        <position position="70"/>
    </location>
</feature>
<feature type="disulfide bond" evidence="4">
    <location>
        <begin position="130"/>
        <end position="225"/>
    </location>
</feature>
<feature type="disulfide bond" evidence="4">
    <location>
        <begin position="202"/>
        <end position="217"/>
    </location>
</feature>
<gene>
    <name type="primary">Prg2</name>
    <name type="synonym">Mbp</name>
</gene>
<organism>
    <name type="scientific">Rattus norvegicus</name>
    <name type="common">Rat</name>
    <dbReference type="NCBI Taxonomy" id="10116"/>
    <lineage>
        <taxon>Eukaryota</taxon>
        <taxon>Metazoa</taxon>
        <taxon>Chordata</taxon>
        <taxon>Craniata</taxon>
        <taxon>Vertebrata</taxon>
        <taxon>Euteleostomi</taxon>
        <taxon>Mammalia</taxon>
        <taxon>Eutheria</taxon>
        <taxon>Euarchontoglires</taxon>
        <taxon>Glires</taxon>
        <taxon>Rodentia</taxon>
        <taxon>Myomorpha</taxon>
        <taxon>Muroidea</taxon>
        <taxon>Muridae</taxon>
        <taxon>Murinae</taxon>
        <taxon>Rattus</taxon>
    </lineage>
</organism>
<proteinExistence type="evidence at transcript level"/>
<sequence>MKFPLLLALLVGGAFALHLSSEASDSKSPLVDESLPREAEISRPEVEESPPGEQLMSLEEEEEEEEEEGSGSEGALGNEGAVSGQDVTDENLQSPKEEDTTSLMGDSGFKTGRYLLVRRPECFNKAQLVCRSCYRGTLASIHSFSVNFRIQSFVRGINQGQVWIGGRIVGWGRCKRFRWIDGSSWNFAYWAAGQPRRGGGRCVTLCTRGGHWRRSGCGKRRPFICAY</sequence>
<dbReference type="EMBL" id="D50568">
    <property type="protein sequence ID" value="BAA09129.1"/>
    <property type="molecule type" value="mRNA"/>
</dbReference>
<dbReference type="PIR" id="S68150">
    <property type="entry name" value="S68150"/>
</dbReference>
<dbReference type="RefSeq" id="NP_113807.2">
    <property type="nucleotide sequence ID" value="NM_031619.2"/>
</dbReference>
<dbReference type="SMR" id="Q63189"/>
<dbReference type="BioGRID" id="248633">
    <property type="interactions" value="1"/>
</dbReference>
<dbReference type="FunCoup" id="Q63189">
    <property type="interactions" value="132"/>
</dbReference>
<dbReference type="IntAct" id="Q63189">
    <property type="interactions" value="1"/>
</dbReference>
<dbReference type="STRING" id="10116.ENSRNOP00000011168"/>
<dbReference type="MEROPS" id="I63.001"/>
<dbReference type="GlyGen" id="Q63189">
    <property type="glycosylation" value="2 sites"/>
</dbReference>
<dbReference type="PhosphoSitePlus" id="Q63189"/>
<dbReference type="PaxDb" id="10116-ENSRNOP00000011168"/>
<dbReference type="GeneID" id="58826"/>
<dbReference type="KEGG" id="rno:58826"/>
<dbReference type="UCSC" id="RGD:69336">
    <property type="organism name" value="rat"/>
</dbReference>
<dbReference type="AGR" id="RGD:69336"/>
<dbReference type="CTD" id="5553"/>
<dbReference type="RGD" id="69336">
    <property type="gene designation" value="Prg2"/>
</dbReference>
<dbReference type="eggNOG" id="KOG4297">
    <property type="taxonomic scope" value="Eukaryota"/>
</dbReference>
<dbReference type="InParanoid" id="Q63189"/>
<dbReference type="OrthoDB" id="6369810at2759"/>
<dbReference type="PhylomeDB" id="Q63189"/>
<dbReference type="Reactome" id="R-RNO-6798695">
    <property type="pathway name" value="Neutrophil degranulation"/>
</dbReference>
<dbReference type="PRO" id="PR:Q63189"/>
<dbReference type="Proteomes" id="UP000002494">
    <property type="component" value="Unplaced"/>
</dbReference>
<dbReference type="GO" id="GO:0005576">
    <property type="term" value="C:extracellular region"/>
    <property type="evidence" value="ECO:0007669"/>
    <property type="project" value="UniProtKB-SubCell"/>
</dbReference>
<dbReference type="GO" id="GO:0030246">
    <property type="term" value="F:carbohydrate binding"/>
    <property type="evidence" value="ECO:0007669"/>
    <property type="project" value="UniProtKB-KW"/>
</dbReference>
<dbReference type="GO" id="GO:0008201">
    <property type="term" value="F:heparin binding"/>
    <property type="evidence" value="ECO:0000303"/>
    <property type="project" value="RGD"/>
</dbReference>
<dbReference type="GO" id="GO:0042742">
    <property type="term" value="P:defense response to bacterium"/>
    <property type="evidence" value="ECO:0007669"/>
    <property type="project" value="UniProtKB-KW"/>
</dbReference>
<dbReference type="GO" id="GO:0002215">
    <property type="term" value="P:defense response to nematode"/>
    <property type="evidence" value="ECO:0000266"/>
    <property type="project" value="RGD"/>
</dbReference>
<dbReference type="GO" id="GO:0006955">
    <property type="term" value="P:immune response"/>
    <property type="evidence" value="ECO:0007669"/>
    <property type="project" value="InterPro"/>
</dbReference>
<dbReference type="GO" id="GO:0032693">
    <property type="term" value="P:negative regulation of interleukin-10 production"/>
    <property type="evidence" value="ECO:0000266"/>
    <property type="project" value="RGD"/>
</dbReference>
<dbReference type="GO" id="GO:0010936">
    <property type="term" value="P:negative regulation of macrophage cytokine production"/>
    <property type="evidence" value="ECO:0000266"/>
    <property type="project" value="RGD"/>
</dbReference>
<dbReference type="GO" id="GO:0032753">
    <property type="term" value="P:positive regulation of interleukin-4 production"/>
    <property type="evidence" value="ECO:0000266"/>
    <property type="project" value="RGD"/>
</dbReference>
<dbReference type="CDD" id="cd03598">
    <property type="entry name" value="CLECT_EMBP_like"/>
    <property type="match status" value="1"/>
</dbReference>
<dbReference type="FunFam" id="3.10.100.10:FF:000090">
    <property type="entry name" value="Proteoglycan 2, bone marrow"/>
    <property type="match status" value="1"/>
</dbReference>
<dbReference type="Gene3D" id="3.10.100.10">
    <property type="entry name" value="Mannose-Binding Protein A, subunit A"/>
    <property type="match status" value="1"/>
</dbReference>
<dbReference type="InterPro" id="IPR001304">
    <property type="entry name" value="C-type_lectin-like"/>
</dbReference>
<dbReference type="InterPro" id="IPR016186">
    <property type="entry name" value="C-type_lectin-like/link_sf"/>
</dbReference>
<dbReference type="InterPro" id="IPR050111">
    <property type="entry name" value="C-type_lectin/snaclec_domain"/>
</dbReference>
<dbReference type="InterPro" id="IPR018378">
    <property type="entry name" value="C-type_lectin_CS"/>
</dbReference>
<dbReference type="InterPro" id="IPR016187">
    <property type="entry name" value="CTDL_fold"/>
</dbReference>
<dbReference type="InterPro" id="IPR033816">
    <property type="entry name" value="EMBP_CTLD"/>
</dbReference>
<dbReference type="InterPro" id="IPR002352">
    <property type="entry name" value="Eosinophil_major_basic"/>
</dbReference>
<dbReference type="PANTHER" id="PTHR22803">
    <property type="entry name" value="MANNOSE, PHOSPHOLIPASE, LECTIN RECEPTOR RELATED"/>
    <property type="match status" value="1"/>
</dbReference>
<dbReference type="Pfam" id="PF00059">
    <property type="entry name" value="Lectin_C"/>
    <property type="match status" value="1"/>
</dbReference>
<dbReference type="PRINTS" id="PR00770">
    <property type="entry name" value="EMAJORBASICP"/>
</dbReference>
<dbReference type="SMART" id="SM00034">
    <property type="entry name" value="CLECT"/>
    <property type="match status" value="1"/>
</dbReference>
<dbReference type="SUPFAM" id="SSF56436">
    <property type="entry name" value="C-type lectin-like"/>
    <property type="match status" value="1"/>
</dbReference>
<dbReference type="PROSITE" id="PS00615">
    <property type="entry name" value="C_TYPE_LECTIN_1"/>
    <property type="match status" value="1"/>
</dbReference>
<dbReference type="PROSITE" id="PS50041">
    <property type="entry name" value="C_TYPE_LECTIN_2"/>
    <property type="match status" value="1"/>
</dbReference>
<protein>
    <recommendedName>
        <fullName>Bone marrow proteoglycan</fullName>
        <shortName>BMPG</shortName>
    </recommendedName>
    <alternativeName>
        <fullName>Proteoglycan 2</fullName>
    </alternativeName>
    <component>
        <recommendedName>
            <fullName>Eosinophil granule major basic protein</fullName>
            <shortName>EMBP</shortName>
            <shortName>MBP</shortName>
        </recommendedName>
    </component>
</protein>